<reference key="1">
    <citation type="journal article" date="2000" name="Nature">
        <title>DNA sequence of both chromosomes of the cholera pathogen Vibrio cholerae.</title>
        <authorList>
            <person name="Heidelberg J.F."/>
            <person name="Eisen J.A."/>
            <person name="Nelson W.C."/>
            <person name="Clayton R.A."/>
            <person name="Gwinn M.L."/>
            <person name="Dodson R.J."/>
            <person name="Haft D.H."/>
            <person name="Hickey E.K."/>
            <person name="Peterson J.D."/>
            <person name="Umayam L.A."/>
            <person name="Gill S.R."/>
            <person name="Nelson K.E."/>
            <person name="Read T.D."/>
            <person name="Tettelin H."/>
            <person name="Richardson D.L."/>
            <person name="Ermolaeva M.D."/>
            <person name="Vamathevan J.J."/>
            <person name="Bass S."/>
            <person name="Qin H."/>
            <person name="Dragoi I."/>
            <person name="Sellers P."/>
            <person name="McDonald L.A."/>
            <person name="Utterback T.R."/>
            <person name="Fleischmann R.D."/>
            <person name="Nierman W.C."/>
            <person name="White O."/>
            <person name="Salzberg S.L."/>
            <person name="Smith H.O."/>
            <person name="Colwell R.R."/>
            <person name="Mekalanos J.J."/>
            <person name="Venter J.C."/>
            <person name="Fraser C.M."/>
        </authorList>
    </citation>
    <scope>NUCLEOTIDE SEQUENCE [LARGE SCALE GENOMIC DNA]</scope>
    <source>
        <strain>ATCC 39315 / El Tor Inaba N16961</strain>
    </source>
</reference>
<keyword id="KW-0012">Acyltransferase</keyword>
<keyword id="KW-0963">Cytoplasm</keyword>
<keyword id="KW-1185">Reference proteome</keyword>
<keyword id="KW-0808">Transferase</keyword>
<organism>
    <name type="scientific">Vibrio cholerae serotype O1 (strain ATCC 39315 / El Tor Inaba N16961)</name>
    <dbReference type="NCBI Taxonomy" id="243277"/>
    <lineage>
        <taxon>Bacteria</taxon>
        <taxon>Pseudomonadati</taxon>
        <taxon>Pseudomonadota</taxon>
        <taxon>Gammaproteobacteria</taxon>
        <taxon>Vibrionales</taxon>
        <taxon>Vibrionaceae</taxon>
        <taxon>Vibrio</taxon>
    </lineage>
</organism>
<sequence length="216" mass="24688">MENQLLVRRLGRQDYTPVWQAMHQFTDQRDSTTRDEVWLVEHNPVFTQGQAGKAEHLLNTGDIPVVQSDRGGQVTYHGPGQLVAYFLIDLRRKKLGVRELVTHIENLVIHTLKHYQIESAARPDAPGVYVKNRKICSLGLRIRKGCSFHGLALNIQMDLAPFLRINPCGYAGMEMIQVSDLHPVSMEQVEKVLIQELVTLLDYEQVEFSTEAYNHE</sequence>
<comment type="function">
    <text evidence="1">Catalyzes the transfer of endogenously produced octanoic acid from octanoyl-acyl-carrier-protein onto the lipoyl domains of lipoate-dependent enzymes. Lipoyl-ACP can also act as a substrate although octanoyl-ACP is likely to be the physiological substrate.</text>
</comment>
<comment type="catalytic activity">
    <reaction evidence="1">
        <text>octanoyl-[ACP] + L-lysyl-[protein] = N(6)-octanoyl-L-lysyl-[protein] + holo-[ACP] + H(+)</text>
        <dbReference type="Rhea" id="RHEA:17665"/>
        <dbReference type="Rhea" id="RHEA-COMP:9636"/>
        <dbReference type="Rhea" id="RHEA-COMP:9685"/>
        <dbReference type="Rhea" id="RHEA-COMP:9752"/>
        <dbReference type="Rhea" id="RHEA-COMP:9928"/>
        <dbReference type="ChEBI" id="CHEBI:15378"/>
        <dbReference type="ChEBI" id="CHEBI:29969"/>
        <dbReference type="ChEBI" id="CHEBI:64479"/>
        <dbReference type="ChEBI" id="CHEBI:78463"/>
        <dbReference type="ChEBI" id="CHEBI:78809"/>
        <dbReference type="EC" id="2.3.1.181"/>
    </reaction>
</comment>
<comment type="pathway">
    <text evidence="1">Protein modification; protein lipoylation via endogenous pathway; protein N(6)-(lipoyl)lysine from octanoyl-[acyl-carrier-protein]: step 1/2.</text>
</comment>
<comment type="subcellular location">
    <subcellularLocation>
        <location evidence="1">Cytoplasm</location>
    </subcellularLocation>
</comment>
<comment type="miscellaneous">
    <text evidence="1">In the reaction, the free carboxyl group of octanoic acid is attached via an amide linkage to the epsilon-amino group of a specific lysine residue of lipoyl domains of lipoate-dependent enzymes.</text>
</comment>
<comment type="similarity">
    <text evidence="1">Belongs to the LipB family.</text>
</comment>
<comment type="sequence caution" evidence="3">
    <conflict type="erroneous initiation">
        <sequence resource="EMBL-CDS" id="AAF94106"/>
    </conflict>
    <text>Extended N-terminus.</text>
</comment>
<accession>Q9KTF8</accession>
<evidence type="ECO:0000255" key="1">
    <source>
        <dbReference type="HAMAP-Rule" id="MF_00013"/>
    </source>
</evidence>
<evidence type="ECO:0000255" key="2">
    <source>
        <dbReference type="PROSITE-ProRule" id="PRU01067"/>
    </source>
</evidence>
<evidence type="ECO:0000305" key="3"/>
<proteinExistence type="inferred from homology"/>
<gene>
    <name evidence="1" type="primary">lipB</name>
    <name type="ordered locus">VC_0944</name>
</gene>
<protein>
    <recommendedName>
        <fullName evidence="1">Octanoyltransferase</fullName>
        <ecNumber evidence="1">2.3.1.181</ecNumber>
    </recommendedName>
    <alternativeName>
        <fullName evidence="1">Lipoate-protein ligase B</fullName>
    </alternativeName>
    <alternativeName>
        <fullName evidence="1">Lipoyl/octanoyl transferase</fullName>
    </alternativeName>
    <alternativeName>
        <fullName evidence="1">Octanoyl-[acyl-carrier-protein]-protein N-octanoyltransferase</fullName>
    </alternativeName>
</protein>
<name>LIPB_VIBCH</name>
<feature type="chain" id="PRO_0000062889" description="Octanoyltransferase">
    <location>
        <begin position="1"/>
        <end position="216"/>
    </location>
</feature>
<feature type="domain" description="BPL/LPL catalytic" evidence="2">
    <location>
        <begin position="31"/>
        <end position="205"/>
    </location>
</feature>
<feature type="active site" description="Acyl-thioester intermediate" evidence="1">
    <location>
        <position position="168"/>
    </location>
</feature>
<feature type="binding site" evidence="1">
    <location>
        <begin position="70"/>
        <end position="77"/>
    </location>
    <ligand>
        <name>substrate</name>
    </ligand>
</feature>
<feature type="binding site" evidence="1">
    <location>
        <begin position="137"/>
        <end position="139"/>
    </location>
    <ligand>
        <name>substrate</name>
    </ligand>
</feature>
<feature type="binding site" evidence="1">
    <location>
        <begin position="150"/>
        <end position="152"/>
    </location>
    <ligand>
        <name>substrate</name>
    </ligand>
</feature>
<feature type="site" description="Lowers pKa of active site Cys" evidence="1">
    <location>
        <position position="134"/>
    </location>
</feature>
<dbReference type="EC" id="2.3.1.181" evidence="1"/>
<dbReference type="EMBL" id="AE003852">
    <property type="protein sequence ID" value="AAF94106.1"/>
    <property type="status" value="ALT_INIT"/>
    <property type="molecule type" value="Genomic_DNA"/>
</dbReference>
<dbReference type="PIR" id="C82259">
    <property type="entry name" value="C82259"/>
</dbReference>
<dbReference type="RefSeq" id="NP_230591.1">
    <property type="nucleotide sequence ID" value="NC_002505.1"/>
</dbReference>
<dbReference type="RefSeq" id="WP_000431344.1">
    <property type="nucleotide sequence ID" value="NZ_LT906614.1"/>
</dbReference>
<dbReference type="SMR" id="Q9KTF8"/>
<dbReference type="STRING" id="243277.VC_0944"/>
<dbReference type="DNASU" id="2614164"/>
<dbReference type="EnsemblBacteria" id="AAF94106">
    <property type="protein sequence ID" value="AAF94106"/>
    <property type="gene ID" value="VC_0944"/>
</dbReference>
<dbReference type="GeneID" id="69720350"/>
<dbReference type="KEGG" id="vch:VC_0944"/>
<dbReference type="PATRIC" id="fig|243277.26.peg.900"/>
<dbReference type="eggNOG" id="COG0321">
    <property type="taxonomic scope" value="Bacteria"/>
</dbReference>
<dbReference type="HOGENOM" id="CLU_035168_3_1_6"/>
<dbReference type="UniPathway" id="UPA00538">
    <property type="reaction ID" value="UER00592"/>
</dbReference>
<dbReference type="Proteomes" id="UP000000584">
    <property type="component" value="Chromosome 1"/>
</dbReference>
<dbReference type="GO" id="GO:0005737">
    <property type="term" value="C:cytoplasm"/>
    <property type="evidence" value="ECO:0007669"/>
    <property type="project" value="UniProtKB-SubCell"/>
</dbReference>
<dbReference type="GO" id="GO:0033819">
    <property type="term" value="F:lipoyl(octanoyl) transferase activity"/>
    <property type="evidence" value="ECO:0000318"/>
    <property type="project" value="GO_Central"/>
</dbReference>
<dbReference type="GO" id="GO:0036211">
    <property type="term" value="P:protein modification process"/>
    <property type="evidence" value="ECO:0007669"/>
    <property type="project" value="InterPro"/>
</dbReference>
<dbReference type="CDD" id="cd16444">
    <property type="entry name" value="LipB"/>
    <property type="match status" value="1"/>
</dbReference>
<dbReference type="FunFam" id="3.30.930.10:FF:000020">
    <property type="entry name" value="Octanoyltransferase"/>
    <property type="match status" value="1"/>
</dbReference>
<dbReference type="Gene3D" id="3.30.930.10">
    <property type="entry name" value="Bira Bifunctional Protein, Domain 2"/>
    <property type="match status" value="1"/>
</dbReference>
<dbReference type="HAMAP" id="MF_00013">
    <property type="entry name" value="LipB"/>
    <property type="match status" value="1"/>
</dbReference>
<dbReference type="InterPro" id="IPR045864">
    <property type="entry name" value="aa-tRNA-synth_II/BPL/LPL"/>
</dbReference>
<dbReference type="InterPro" id="IPR004143">
    <property type="entry name" value="BPL_LPL_catalytic"/>
</dbReference>
<dbReference type="InterPro" id="IPR000544">
    <property type="entry name" value="Octanoyltransferase"/>
</dbReference>
<dbReference type="InterPro" id="IPR020605">
    <property type="entry name" value="Octanoyltransferase_CS"/>
</dbReference>
<dbReference type="NCBIfam" id="TIGR00214">
    <property type="entry name" value="lipB"/>
    <property type="match status" value="1"/>
</dbReference>
<dbReference type="NCBIfam" id="NF010922">
    <property type="entry name" value="PRK14342.1"/>
    <property type="match status" value="1"/>
</dbReference>
<dbReference type="PANTHER" id="PTHR10993:SF7">
    <property type="entry name" value="LIPOYLTRANSFERASE 2, MITOCHONDRIAL-RELATED"/>
    <property type="match status" value="1"/>
</dbReference>
<dbReference type="PANTHER" id="PTHR10993">
    <property type="entry name" value="OCTANOYLTRANSFERASE"/>
    <property type="match status" value="1"/>
</dbReference>
<dbReference type="Pfam" id="PF21948">
    <property type="entry name" value="LplA-B_cat"/>
    <property type="match status" value="1"/>
</dbReference>
<dbReference type="PIRSF" id="PIRSF016262">
    <property type="entry name" value="LPLase"/>
    <property type="match status" value="1"/>
</dbReference>
<dbReference type="SUPFAM" id="SSF55681">
    <property type="entry name" value="Class II aaRS and biotin synthetases"/>
    <property type="match status" value="1"/>
</dbReference>
<dbReference type="PROSITE" id="PS51733">
    <property type="entry name" value="BPL_LPL_CATALYTIC"/>
    <property type="match status" value="1"/>
</dbReference>
<dbReference type="PROSITE" id="PS01313">
    <property type="entry name" value="LIPB"/>
    <property type="match status" value="1"/>
</dbReference>